<proteinExistence type="inferred from homology"/>
<gene>
    <name evidence="1" type="primary">der</name>
    <name type="synonym">engA</name>
    <name type="ordered locus">GWCH70_2159</name>
</gene>
<name>DER_GEOSW</name>
<dbReference type="EMBL" id="CP001638">
    <property type="protein sequence ID" value="ACS24869.1"/>
    <property type="molecule type" value="Genomic_DNA"/>
</dbReference>
<dbReference type="SMR" id="C5D3F4"/>
<dbReference type="STRING" id="471223.GWCH70_2159"/>
<dbReference type="KEGG" id="gwc:GWCH70_2159"/>
<dbReference type="eggNOG" id="COG1160">
    <property type="taxonomic scope" value="Bacteria"/>
</dbReference>
<dbReference type="HOGENOM" id="CLU_016077_6_2_9"/>
<dbReference type="OrthoDB" id="9805918at2"/>
<dbReference type="GO" id="GO:0005525">
    <property type="term" value="F:GTP binding"/>
    <property type="evidence" value="ECO:0007669"/>
    <property type="project" value="UniProtKB-UniRule"/>
</dbReference>
<dbReference type="GO" id="GO:0043022">
    <property type="term" value="F:ribosome binding"/>
    <property type="evidence" value="ECO:0007669"/>
    <property type="project" value="TreeGrafter"/>
</dbReference>
<dbReference type="GO" id="GO:0042254">
    <property type="term" value="P:ribosome biogenesis"/>
    <property type="evidence" value="ECO:0007669"/>
    <property type="project" value="UniProtKB-KW"/>
</dbReference>
<dbReference type="CDD" id="cd01894">
    <property type="entry name" value="EngA1"/>
    <property type="match status" value="1"/>
</dbReference>
<dbReference type="CDD" id="cd01895">
    <property type="entry name" value="EngA2"/>
    <property type="match status" value="1"/>
</dbReference>
<dbReference type="FunFam" id="3.30.300.20:FF:000004">
    <property type="entry name" value="GTPase Der"/>
    <property type="match status" value="1"/>
</dbReference>
<dbReference type="FunFam" id="3.40.50.300:FF:000040">
    <property type="entry name" value="GTPase Der"/>
    <property type="match status" value="1"/>
</dbReference>
<dbReference type="FunFam" id="3.40.50.300:FF:000057">
    <property type="entry name" value="GTPase Der"/>
    <property type="match status" value="1"/>
</dbReference>
<dbReference type="Gene3D" id="3.30.300.20">
    <property type="match status" value="1"/>
</dbReference>
<dbReference type="Gene3D" id="3.40.50.300">
    <property type="entry name" value="P-loop containing nucleotide triphosphate hydrolases"/>
    <property type="match status" value="2"/>
</dbReference>
<dbReference type="HAMAP" id="MF_00195">
    <property type="entry name" value="GTPase_Der"/>
    <property type="match status" value="1"/>
</dbReference>
<dbReference type="InterPro" id="IPR031166">
    <property type="entry name" value="G_ENGA"/>
</dbReference>
<dbReference type="InterPro" id="IPR006073">
    <property type="entry name" value="GTP-bd"/>
</dbReference>
<dbReference type="InterPro" id="IPR016484">
    <property type="entry name" value="GTPase_Der"/>
</dbReference>
<dbReference type="InterPro" id="IPR032859">
    <property type="entry name" value="KH_dom-like"/>
</dbReference>
<dbReference type="InterPro" id="IPR015946">
    <property type="entry name" value="KH_dom-like_a/b"/>
</dbReference>
<dbReference type="InterPro" id="IPR027417">
    <property type="entry name" value="P-loop_NTPase"/>
</dbReference>
<dbReference type="InterPro" id="IPR005225">
    <property type="entry name" value="Small_GTP-bd"/>
</dbReference>
<dbReference type="NCBIfam" id="TIGR03594">
    <property type="entry name" value="GTPase_EngA"/>
    <property type="match status" value="1"/>
</dbReference>
<dbReference type="NCBIfam" id="TIGR00231">
    <property type="entry name" value="small_GTP"/>
    <property type="match status" value="2"/>
</dbReference>
<dbReference type="PANTHER" id="PTHR43834">
    <property type="entry name" value="GTPASE DER"/>
    <property type="match status" value="1"/>
</dbReference>
<dbReference type="PANTHER" id="PTHR43834:SF6">
    <property type="entry name" value="GTPASE DER"/>
    <property type="match status" value="1"/>
</dbReference>
<dbReference type="Pfam" id="PF14714">
    <property type="entry name" value="KH_dom-like"/>
    <property type="match status" value="1"/>
</dbReference>
<dbReference type="Pfam" id="PF01926">
    <property type="entry name" value="MMR_HSR1"/>
    <property type="match status" value="2"/>
</dbReference>
<dbReference type="PIRSF" id="PIRSF006485">
    <property type="entry name" value="GTP-binding_EngA"/>
    <property type="match status" value="1"/>
</dbReference>
<dbReference type="SUPFAM" id="SSF52540">
    <property type="entry name" value="P-loop containing nucleoside triphosphate hydrolases"/>
    <property type="match status" value="2"/>
</dbReference>
<dbReference type="PROSITE" id="PS51712">
    <property type="entry name" value="G_ENGA"/>
    <property type="match status" value="2"/>
</dbReference>
<protein>
    <recommendedName>
        <fullName evidence="1">GTPase Der</fullName>
    </recommendedName>
    <alternativeName>
        <fullName evidence="1">GTP-binding protein EngA</fullName>
    </alternativeName>
</protein>
<feature type="chain" id="PRO_1000204041" description="GTPase Der">
    <location>
        <begin position="1"/>
        <end position="436"/>
    </location>
</feature>
<feature type="domain" description="EngA-type G 1">
    <location>
        <begin position="4"/>
        <end position="167"/>
    </location>
</feature>
<feature type="domain" description="EngA-type G 2">
    <location>
        <begin position="176"/>
        <end position="351"/>
    </location>
</feature>
<feature type="domain" description="KH-like" evidence="1">
    <location>
        <begin position="352"/>
        <end position="436"/>
    </location>
</feature>
<feature type="binding site" evidence="1">
    <location>
        <begin position="10"/>
        <end position="17"/>
    </location>
    <ligand>
        <name>GTP</name>
        <dbReference type="ChEBI" id="CHEBI:37565"/>
        <label>1</label>
    </ligand>
</feature>
<feature type="binding site" evidence="1">
    <location>
        <begin position="57"/>
        <end position="61"/>
    </location>
    <ligand>
        <name>GTP</name>
        <dbReference type="ChEBI" id="CHEBI:37565"/>
        <label>1</label>
    </ligand>
</feature>
<feature type="binding site" evidence="1">
    <location>
        <begin position="119"/>
        <end position="122"/>
    </location>
    <ligand>
        <name>GTP</name>
        <dbReference type="ChEBI" id="CHEBI:37565"/>
        <label>1</label>
    </ligand>
</feature>
<feature type="binding site" evidence="1">
    <location>
        <begin position="182"/>
        <end position="189"/>
    </location>
    <ligand>
        <name>GTP</name>
        <dbReference type="ChEBI" id="CHEBI:37565"/>
        <label>2</label>
    </ligand>
</feature>
<feature type="binding site" evidence="1">
    <location>
        <begin position="229"/>
        <end position="233"/>
    </location>
    <ligand>
        <name>GTP</name>
        <dbReference type="ChEBI" id="CHEBI:37565"/>
        <label>2</label>
    </ligand>
</feature>
<feature type="binding site" evidence="1">
    <location>
        <begin position="294"/>
        <end position="297"/>
    </location>
    <ligand>
        <name>GTP</name>
        <dbReference type="ChEBI" id="CHEBI:37565"/>
        <label>2</label>
    </ligand>
</feature>
<sequence length="436" mass="49116">MTNPVVAIVGRPNVGKSTIFNRIVGERISIVEDVPGVTRDRIYSSAEWLNHKFYLIDTGGIDIGDEPLLVQIRQQAEIAIDEADVIIFMVNGRDGVTAADEEVAKILHRSNKPVVLAVNKIDNPEMRDLIYDFYALGFGDPYPISGSHGTGLGDLLDAVARHFPKRGQEEYEEDVIKFCLIGRPNVGKSSLVNAILGEERVIVSDIAGTTRDAVDTTFVREGQEYVIIDTAGMRKRGKIYESTEKYSVLRALKAIERSDVVLVVLNAEEGIIEQDKKIAGYAHEAGRGVIIVVNKWDAIEKDDKTLIEFERKIRDHFPFLDYAPIIFVSAKTKQRLHKLLPLVRMVSENHAMRVQTNVLNEVIMDAVAMNPTPTHNGRRLKIYYMTQVAVKPPTFVVFVNDPELMHFSYERFLENRIRDAFGFEGTPIKIIARPRK</sequence>
<evidence type="ECO:0000255" key="1">
    <source>
        <dbReference type="HAMAP-Rule" id="MF_00195"/>
    </source>
</evidence>
<reference key="1">
    <citation type="submission" date="2009-06" db="EMBL/GenBank/DDBJ databases">
        <title>Complete sequence of chromosome of Geopacillus sp. WCH70.</title>
        <authorList>
            <consortium name="US DOE Joint Genome Institute"/>
            <person name="Lucas S."/>
            <person name="Copeland A."/>
            <person name="Lapidus A."/>
            <person name="Glavina del Rio T."/>
            <person name="Dalin E."/>
            <person name="Tice H."/>
            <person name="Bruce D."/>
            <person name="Goodwin L."/>
            <person name="Pitluck S."/>
            <person name="Chertkov O."/>
            <person name="Brettin T."/>
            <person name="Detter J.C."/>
            <person name="Han C."/>
            <person name="Larimer F."/>
            <person name="Land M."/>
            <person name="Hauser L."/>
            <person name="Kyrpides N."/>
            <person name="Mikhailova N."/>
            <person name="Brumm P."/>
            <person name="Mead D.A."/>
            <person name="Richardson P."/>
        </authorList>
    </citation>
    <scope>NUCLEOTIDE SEQUENCE [LARGE SCALE GENOMIC DNA]</scope>
    <source>
        <strain>WCH70</strain>
    </source>
</reference>
<organism>
    <name type="scientific">Geobacillus sp. (strain WCH70)</name>
    <dbReference type="NCBI Taxonomy" id="471223"/>
    <lineage>
        <taxon>Bacteria</taxon>
        <taxon>Bacillati</taxon>
        <taxon>Bacillota</taxon>
        <taxon>Bacilli</taxon>
        <taxon>Bacillales</taxon>
        <taxon>Anoxybacillaceae</taxon>
        <taxon>Geobacillus</taxon>
    </lineage>
</organism>
<comment type="function">
    <text evidence="1">GTPase that plays an essential role in the late steps of ribosome biogenesis.</text>
</comment>
<comment type="subunit">
    <text evidence="1">Associates with the 50S ribosomal subunit.</text>
</comment>
<comment type="similarity">
    <text evidence="1">Belongs to the TRAFAC class TrmE-Era-EngA-EngB-Septin-like GTPase superfamily. EngA (Der) GTPase family.</text>
</comment>
<keyword id="KW-0342">GTP-binding</keyword>
<keyword id="KW-0547">Nucleotide-binding</keyword>
<keyword id="KW-0677">Repeat</keyword>
<keyword id="KW-0690">Ribosome biogenesis</keyword>
<accession>C5D3F4</accession>